<gene>
    <name evidence="1" type="primary">astB</name>
    <name type="ordered locus">SeSA_A1401</name>
</gene>
<evidence type="ECO:0000255" key="1">
    <source>
        <dbReference type="HAMAP-Rule" id="MF_01172"/>
    </source>
</evidence>
<feature type="chain" id="PRO_1000138028" description="N-succinylarginine dihydrolase">
    <location>
        <begin position="1"/>
        <end position="447"/>
    </location>
</feature>
<feature type="active site" evidence="1">
    <location>
        <position position="174"/>
    </location>
</feature>
<feature type="active site" evidence="1">
    <location>
        <position position="248"/>
    </location>
</feature>
<feature type="active site" description="Nucleophile" evidence="1">
    <location>
        <position position="365"/>
    </location>
</feature>
<feature type="binding site" evidence="1">
    <location>
        <begin position="19"/>
        <end position="28"/>
    </location>
    <ligand>
        <name>substrate</name>
    </ligand>
</feature>
<feature type="binding site" evidence="1">
    <location>
        <position position="110"/>
    </location>
    <ligand>
        <name>substrate</name>
    </ligand>
</feature>
<feature type="binding site" evidence="1">
    <location>
        <begin position="137"/>
        <end position="138"/>
    </location>
    <ligand>
        <name>substrate</name>
    </ligand>
</feature>
<feature type="binding site" evidence="1">
    <location>
        <position position="212"/>
    </location>
    <ligand>
        <name>substrate</name>
    </ligand>
</feature>
<feature type="binding site" evidence="1">
    <location>
        <position position="250"/>
    </location>
    <ligand>
        <name>substrate</name>
    </ligand>
</feature>
<feature type="binding site" evidence="1">
    <location>
        <position position="359"/>
    </location>
    <ligand>
        <name>substrate</name>
    </ligand>
</feature>
<comment type="function">
    <text evidence="1">Catalyzes the hydrolysis of N(2)-succinylarginine into N(2)-succinylornithine, ammonia and CO(2).</text>
</comment>
<comment type="catalytic activity">
    <reaction evidence="1">
        <text>N(2)-succinyl-L-arginine + 2 H2O + 2 H(+) = N(2)-succinyl-L-ornithine + 2 NH4(+) + CO2</text>
        <dbReference type="Rhea" id="RHEA:19533"/>
        <dbReference type="ChEBI" id="CHEBI:15377"/>
        <dbReference type="ChEBI" id="CHEBI:15378"/>
        <dbReference type="ChEBI" id="CHEBI:16526"/>
        <dbReference type="ChEBI" id="CHEBI:28938"/>
        <dbReference type="ChEBI" id="CHEBI:58241"/>
        <dbReference type="ChEBI" id="CHEBI:58514"/>
        <dbReference type="EC" id="3.5.3.23"/>
    </reaction>
</comment>
<comment type="pathway">
    <text evidence="1">Amino-acid degradation; L-arginine degradation via AST pathway; L-glutamate and succinate from L-arginine: step 2/5.</text>
</comment>
<comment type="subunit">
    <text evidence="1">Homodimer.</text>
</comment>
<comment type="similarity">
    <text evidence="1">Belongs to the succinylarginine dihydrolase family.</text>
</comment>
<proteinExistence type="inferred from homology"/>
<name>ASTB_SALSV</name>
<accession>B4TUC4</accession>
<protein>
    <recommendedName>
        <fullName evidence="1">N-succinylarginine dihydrolase</fullName>
        <ecNumber evidence="1">3.5.3.23</ecNumber>
    </recommendedName>
</protein>
<keyword id="KW-0056">Arginine metabolism</keyword>
<keyword id="KW-0378">Hydrolase</keyword>
<reference key="1">
    <citation type="journal article" date="2011" name="J. Bacteriol.">
        <title>Comparative genomics of 28 Salmonella enterica isolates: evidence for CRISPR-mediated adaptive sublineage evolution.</title>
        <authorList>
            <person name="Fricke W.F."/>
            <person name="Mammel M.K."/>
            <person name="McDermott P.F."/>
            <person name="Tartera C."/>
            <person name="White D.G."/>
            <person name="Leclerc J.E."/>
            <person name="Ravel J."/>
            <person name="Cebula T.A."/>
        </authorList>
    </citation>
    <scope>NUCLEOTIDE SEQUENCE [LARGE SCALE GENOMIC DNA]</scope>
    <source>
        <strain>CVM19633</strain>
    </source>
</reference>
<sequence length="447" mass="49143">MTAHEVNFDGLVGLTHHYAGLSFGNEASTRHRFQVSNPRLAVKQGLLKMKALADAGFPQAVIPPHERPFIPALRQLGFTGSDEQILDKVARQAPRWLSSVSSASPMWVANAATVCPSADALDGKVHLTVANLNNKFHRALEAPVTEALLRAIFRDESQFSVHSALPQVALLGDEGAANHNRLGGEYGSAGVQLFVYGREEENEIRPARYPARQSREASEAVARLNQVNPQQVIFAQQNPEVIDQGVFHNDVIAVSNRQVLFCHEAAFARQKVLINQLRTCVDGFMAIEVPAGEVSVSDAVATYLFNSQLLSRDDGSMLLVLPRECQDHVGVWRYLNKLVAEDNPISAMQVFDLRESMANGGGPACLRLRVVLTEEERRAVNPAVMMNDALFTALNSWADRYYRDRLTAADLADPLLLREGREALDMLTHLLDLGSVYPFQQTGAADG</sequence>
<dbReference type="EC" id="3.5.3.23" evidence="1"/>
<dbReference type="EMBL" id="CP001127">
    <property type="protein sequence ID" value="ACF91941.1"/>
    <property type="molecule type" value="Genomic_DNA"/>
</dbReference>
<dbReference type="RefSeq" id="WP_000123944.1">
    <property type="nucleotide sequence ID" value="NC_011094.1"/>
</dbReference>
<dbReference type="SMR" id="B4TUC4"/>
<dbReference type="KEGG" id="sew:SeSA_A1401"/>
<dbReference type="HOGENOM" id="CLU_053835_0_0_6"/>
<dbReference type="UniPathway" id="UPA00185">
    <property type="reaction ID" value="UER00280"/>
</dbReference>
<dbReference type="Proteomes" id="UP000001865">
    <property type="component" value="Chromosome"/>
</dbReference>
<dbReference type="GO" id="GO:0009015">
    <property type="term" value="F:N-succinylarginine dihydrolase activity"/>
    <property type="evidence" value="ECO:0007669"/>
    <property type="project" value="UniProtKB-UniRule"/>
</dbReference>
<dbReference type="GO" id="GO:0019544">
    <property type="term" value="P:arginine catabolic process to glutamate"/>
    <property type="evidence" value="ECO:0007669"/>
    <property type="project" value="UniProtKB-UniRule"/>
</dbReference>
<dbReference type="GO" id="GO:0019545">
    <property type="term" value="P:arginine catabolic process to succinate"/>
    <property type="evidence" value="ECO:0007669"/>
    <property type="project" value="UniProtKB-UniRule"/>
</dbReference>
<dbReference type="FunFam" id="3.75.10.20:FF:000001">
    <property type="entry name" value="N-succinylarginine dihydrolase"/>
    <property type="match status" value="1"/>
</dbReference>
<dbReference type="Gene3D" id="3.75.10.20">
    <property type="entry name" value="Succinylarginine dihydrolase"/>
    <property type="match status" value="1"/>
</dbReference>
<dbReference type="HAMAP" id="MF_01172">
    <property type="entry name" value="AstB"/>
    <property type="match status" value="1"/>
</dbReference>
<dbReference type="InterPro" id="IPR037031">
    <property type="entry name" value="AstB_sf"/>
</dbReference>
<dbReference type="InterPro" id="IPR007079">
    <property type="entry name" value="SuccinylArg_d-Hdrlase_AstB"/>
</dbReference>
<dbReference type="NCBIfam" id="TIGR03241">
    <property type="entry name" value="arg_catab_astB"/>
    <property type="match status" value="1"/>
</dbReference>
<dbReference type="NCBIfam" id="NF009789">
    <property type="entry name" value="PRK13281.1"/>
    <property type="match status" value="1"/>
</dbReference>
<dbReference type="PANTHER" id="PTHR30420">
    <property type="entry name" value="N-SUCCINYLARGININE DIHYDROLASE"/>
    <property type="match status" value="1"/>
</dbReference>
<dbReference type="PANTHER" id="PTHR30420:SF2">
    <property type="entry name" value="N-SUCCINYLARGININE DIHYDROLASE"/>
    <property type="match status" value="1"/>
</dbReference>
<dbReference type="Pfam" id="PF04996">
    <property type="entry name" value="AstB"/>
    <property type="match status" value="1"/>
</dbReference>
<dbReference type="SUPFAM" id="SSF55909">
    <property type="entry name" value="Pentein"/>
    <property type="match status" value="1"/>
</dbReference>
<organism>
    <name type="scientific">Salmonella schwarzengrund (strain CVM19633)</name>
    <dbReference type="NCBI Taxonomy" id="439843"/>
    <lineage>
        <taxon>Bacteria</taxon>
        <taxon>Pseudomonadati</taxon>
        <taxon>Pseudomonadota</taxon>
        <taxon>Gammaproteobacteria</taxon>
        <taxon>Enterobacterales</taxon>
        <taxon>Enterobacteriaceae</taxon>
        <taxon>Salmonella</taxon>
    </lineage>
</organism>